<accession>C0MFA6</accession>
<proteinExistence type="inferred from homology"/>
<evidence type="ECO:0000255" key="1">
    <source>
        <dbReference type="HAMAP-Rule" id="MF_00163"/>
    </source>
</evidence>
<sequence length="204" mass="22851">MSAQDKLIKAQHLIDMNDIIREGNPTLRAVAKEVEFPLSDDDIILGEKMMQFLKHSQDPVMGEKLGLRAGVGLAAPQIDVSKRIIAVLVPNPEDSEGNPPKEAYSMEEVLYNPKIVSHSVQDAALADGEGCLSVDRVVEGYVVRHARVTVEYYDKHNEKHRIKLKGYNAIVVQHEIDHINGVLFYDRINAKKPFEAKEGMLILE</sequence>
<dbReference type="EC" id="3.5.1.88" evidence="1"/>
<dbReference type="EMBL" id="FM204884">
    <property type="protein sequence ID" value="CAW97934.1"/>
    <property type="molecule type" value="Genomic_DNA"/>
</dbReference>
<dbReference type="SMR" id="C0MFA6"/>
<dbReference type="KEGG" id="seq:SZO_02070"/>
<dbReference type="PATRIC" id="fig|40041.11.peg.228"/>
<dbReference type="eggNOG" id="COG0242">
    <property type="taxonomic scope" value="Bacteria"/>
</dbReference>
<dbReference type="HOGENOM" id="CLU_061901_4_0_9"/>
<dbReference type="Proteomes" id="UP000001368">
    <property type="component" value="Chromosome"/>
</dbReference>
<dbReference type="GO" id="GO:0046872">
    <property type="term" value="F:metal ion binding"/>
    <property type="evidence" value="ECO:0007669"/>
    <property type="project" value="UniProtKB-KW"/>
</dbReference>
<dbReference type="GO" id="GO:0042586">
    <property type="term" value="F:peptide deformylase activity"/>
    <property type="evidence" value="ECO:0007669"/>
    <property type="project" value="UniProtKB-UniRule"/>
</dbReference>
<dbReference type="GO" id="GO:0043686">
    <property type="term" value="P:co-translational protein modification"/>
    <property type="evidence" value="ECO:0007669"/>
    <property type="project" value="TreeGrafter"/>
</dbReference>
<dbReference type="GO" id="GO:0006412">
    <property type="term" value="P:translation"/>
    <property type="evidence" value="ECO:0007669"/>
    <property type="project" value="UniProtKB-UniRule"/>
</dbReference>
<dbReference type="CDD" id="cd00487">
    <property type="entry name" value="Pep_deformylase"/>
    <property type="match status" value="1"/>
</dbReference>
<dbReference type="FunFam" id="3.90.45.10:FF:000002">
    <property type="entry name" value="Peptide deformylase"/>
    <property type="match status" value="1"/>
</dbReference>
<dbReference type="Gene3D" id="3.90.45.10">
    <property type="entry name" value="Peptide deformylase"/>
    <property type="match status" value="1"/>
</dbReference>
<dbReference type="HAMAP" id="MF_00163">
    <property type="entry name" value="Pep_deformylase"/>
    <property type="match status" value="1"/>
</dbReference>
<dbReference type="InterPro" id="IPR023635">
    <property type="entry name" value="Peptide_deformylase"/>
</dbReference>
<dbReference type="InterPro" id="IPR036821">
    <property type="entry name" value="Peptide_deformylase_sf"/>
</dbReference>
<dbReference type="NCBIfam" id="TIGR00079">
    <property type="entry name" value="pept_deformyl"/>
    <property type="match status" value="1"/>
</dbReference>
<dbReference type="PANTHER" id="PTHR10458">
    <property type="entry name" value="PEPTIDE DEFORMYLASE"/>
    <property type="match status" value="1"/>
</dbReference>
<dbReference type="PANTHER" id="PTHR10458:SF8">
    <property type="entry name" value="PEPTIDE DEFORMYLASE 2"/>
    <property type="match status" value="1"/>
</dbReference>
<dbReference type="Pfam" id="PF01327">
    <property type="entry name" value="Pep_deformylase"/>
    <property type="match status" value="1"/>
</dbReference>
<dbReference type="PIRSF" id="PIRSF004749">
    <property type="entry name" value="Pep_def"/>
    <property type="match status" value="1"/>
</dbReference>
<dbReference type="PRINTS" id="PR01576">
    <property type="entry name" value="PDEFORMYLASE"/>
</dbReference>
<dbReference type="SUPFAM" id="SSF56420">
    <property type="entry name" value="Peptide deformylase"/>
    <property type="match status" value="1"/>
</dbReference>
<reference key="1">
    <citation type="journal article" date="2009" name="PLoS Pathog.">
        <title>Genomic evidence for the evolution of Streptococcus equi: host restriction, increased virulence, and genetic exchange with human pathogens.</title>
        <authorList>
            <person name="Holden M.T.G."/>
            <person name="Heather Z."/>
            <person name="Paillot R."/>
            <person name="Steward K.F."/>
            <person name="Webb K."/>
            <person name="Ainslie F."/>
            <person name="Jourdan T."/>
            <person name="Bason N.C."/>
            <person name="Holroyd N.E."/>
            <person name="Mungall K."/>
            <person name="Quail M.A."/>
            <person name="Sanders M."/>
            <person name="Simmonds M."/>
            <person name="Willey D."/>
            <person name="Brooks K."/>
            <person name="Aanensen D.M."/>
            <person name="Spratt B.G."/>
            <person name="Jolley K.A."/>
            <person name="Maiden M.C.J."/>
            <person name="Kehoe M."/>
            <person name="Chanter N."/>
            <person name="Bentley S.D."/>
            <person name="Robinson C."/>
            <person name="Maskell D.J."/>
            <person name="Parkhill J."/>
            <person name="Waller A.S."/>
        </authorList>
    </citation>
    <scope>NUCLEOTIDE SEQUENCE [LARGE SCALE GENOMIC DNA]</scope>
    <source>
        <strain>H70</strain>
    </source>
</reference>
<name>DEF_STRS7</name>
<organism>
    <name type="scientific">Streptococcus equi subsp. zooepidemicus (strain H70)</name>
    <dbReference type="NCBI Taxonomy" id="553483"/>
    <lineage>
        <taxon>Bacteria</taxon>
        <taxon>Bacillati</taxon>
        <taxon>Bacillota</taxon>
        <taxon>Bacilli</taxon>
        <taxon>Lactobacillales</taxon>
        <taxon>Streptococcaceae</taxon>
        <taxon>Streptococcus</taxon>
    </lineage>
</organism>
<feature type="chain" id="PRO_1000203607" description="Peptide deformylase">
    <location>
        <begin position="1"/>
        <end position="204"/>
    </location>
</feature>
<feature type="active site" evidence="1">
    <location>
        <position position="175"/>
    </location>
</feature>
<feature type="binding site" evidence="1">
    <location>
        <position position="131"/>
    </location>
    <ligand>
        <name>Fe cation</name>
        <dbReference type="ChEBI" id="CHEBI:24875"/>
    </ligand>
</feature>
<feature type="binding site" evidence="1">
    <location>
        <position position="174"/>
    </location>
    <ligand>
        <name>Fe cation</name>
        <dbReference type="ChEBI" id="CHEBI:24875"/>
    </ligand>
</feature>
<feature type="binding site" evidence="1">
    <location>
        <position position="178"/>
    </location>
    <ligand>
        <name>Fe cation</name>
        <dbReference type="ChEBI" id="CHEBI:24875"/>
    </ligand>
</feature>
<keyword id="KW-0378">Hydrolase</keyword>
<keyword id="KW-0408">Iron</keyword>
<keyword id="KW-0479">Metal-binding</keyword>
<keyword id="KW-0648">Protein biosynthesis</keyword>
<comment type="function">
    <text evidence="1">Removes the formyl group from the N-terminal Met of newly synthesized proteins. Requires at least a dipeptide for an efficient rate of reaction. N-terminal L-methionine is a prerequisite for activity but the enzyme has broad specificity at other positions.</text>
</comment>
<comment type="catalytic activity">
    <reaction evidence="1">
        <text>N-terminal N-formyl-L-methionyl-[peptide] + H2O = N-terminal L-methionyl-[peptide] + formate</text>
        <dbReference type="Rhea" id="RHEA:24420"/>
        <dbReference type="Rhea" id="RHEA-COMP:10639"/>
        <dbReference type="Rhea" id="RHEA-COMP:10640"/>
        <dbReference type="ChEBI" id="CHEBI:15377"/>
        <dbReference type="ChEBI" id="CHEBI:15740"/>
        <dbReference type="ChEBI" id="CHEBI:49298"/>
        <dbReference type="ChEBI" id="CHEBI:64731"/>
        <dbReference type="EC" id="3.5.1.88"/>
    </reaction>
</comment>
<comment type="cofactor">
    <cofactor evidence="1">
        <name>Fe(2+)</name>
        <dbReference type="ChEBI" id="CHEBI:29033"/>
    </cofactor>
    <text evidence="1">Binds 1 Fe(2+) ion.</text>
</comment>
<comment type="similarity">
    <text evidence="1">Belongs to the polypeptide deformylase family.</text>
</comment>
<protein>
    <recommendedName>
        <fullName evidence="1">Peptide deformylase</fullName>
        <shortName evidence="1">PDF</shortName>
        <ecNumber evidence="1">3.5.1.88</ecNumber>
    </recommendedName>
    <alternativeName>
        <fullName evidence="1">Polypeptide deformylase</fullName>
    </alternativeName>
</protein>
<gene>
    <name evidence="1" type="primary">def</name>
    <name type="ordered locus">SZO_02070</name>
</gene>